<keyword id="KW-0067">ATP-binding</keyword>
<keyword id="KW-0436">Ligase</keyword>
<keyword id="KW-0547">Nucleotide-binding</keyword>
<keyword id="KW-0648">Protein biosynthesis</keyword>
<keyword id="KW-1185">Reference proteome</keyword>
<comment type="function">
    <text evidence="1">Allows the formation of correctly charged Asn-tRNA(Asn) or Gln-tRNA(Gln) through the transamidation of misacylated Asp-tRNA(Asn) or Glu-tRNA(Gln) in organisms which lack either or both of asparaginyl-tRNA or glutaminyl-tRNA synthetases. The reaction takes place in the presence of glutamine and ATP through an activated phospho-Asp-tRNA(Asn) or phospho-Glu-tRNA(Gln) (By similarity).</text>
</comment>
<comment type="catalytic activity">
    <reaction>
        <text>L-glutamyl-tRNA(Gln) + L-glutamine + ATP + H2O = L-glutaminyl-tRNA(Gln) + L-glutamate + ADP + phosphate + H(+)</text>
        <dbReference type="Rhea" id="RHEA:17521"/>
        <dbReference type="Rhea" id="RHEA-COMP:9681"/>
        <dbReference type="Rhea" id="RHEA-COMP:9684"/>
        <dbReference type="ChEBI" id="CHEBI:15377"/>
        <dbReference type="ChEBI" id="CHEBI:15378"/>
        <dbReference type="ChEBI" id="CHEBI:29985"/>
        <dbReference type="ChEBI" id="CHEBI:30616"/>
        <dbReference type="ChEBI" id="CHEBI:43474"/>
        <dbReference type="ChEBI" id="CHEBI:58359"/>
        <dbReference type="ChEBI" id="CHEBI:78520"/>
        <dbReference type="ChEBI" id="CHEBI:78521"/>
        <dbReference type="ChEBI" id="CHEBI:456216"/>
    </reaction>
</comment>
<comment type="catalytic activity">
    <reaction>
        <text>L-aspartyl-tRNA(Asn) + L-glutamine + ATP + H2O = L-asparaginyl-tRNA(Asn) + L-glutamate + ADP + phosphate + 2 H(+)</text>
        <dbReference type="Rhea" id="RHEA:14513"/>
        <dbReference type="Rhea" id="RHEA-COMP:9674"/>
        <dbReference type="Rhea" id="RHEA-COMP:9677"/>
        <dbReference type="ChEBI" id="CHEBI:15377"/>
        <dbReference type="ChEBI" id="CHEBI:15378"/>
        <dbReference type="ChEBI" id="CHEBI:29985"/>
        <dbReference type="ChEBI" id="CHEBI:30616"/>
        <dbReference type="ChEBI" id="CHEBI:43474"/>
        <dbReference type="ChEBI" id="CHEBI:58359"/>
        <dbReference type="ChEBI" id="CHEBI:78515"/>
        <dbReference type="ChEBI" id="CHEBI:78516"/>
        <dbReference type="ChEBI" id="CHEBI:456216"/>
    </reaction>
</comment>
<comment type="subunit">
    <text evidence="1">Heterotrimer of A, B and C subunits.</text>
</comment>
<comment type="similarity">
    <text evidence="3">Belongs to the GatC family.</text>
</comment>
<comment type="sequence caution" evidence="3">
    <conflict type="erroneous initiation">
        <sequence resource="EMBL-CDS" id="AAC65969"/>
    </conflict>
</comment>
<protein>
    <recommendedName>
        <fullName>Glutamyl-tRNA(Gln) amidotransferase subunit C</fullName>
        <shortName>Glu-ADT subunit C</shortName>
        <ecNumber>6.3.5.-</ecNumber>
    </recommendedName>
</protein>
<evidence type="ECO:0000250" key="1"/>
<evidence type="ECO:0000256" key="2">
    <source>
        <dbReference type="SAM" id="MobiDB-lite"/>
    </source>
</evidence>
<evidence type="ECO:0000305" key="3"/>
<dbReference type="EC" id="6.3.5.-"/>
<dbReference type="EMBL" id="AE000520">
    <property type="protein sequence ID" value="AAC65969.1"/>
    <property type="status" value="ALT_INIT"/>
    <property type="molecule type" value="Genomic_DNA"/>
</dbReference>
<dbReference type="PIR" id="G71253">
    <property type="entry name" value="G71253"/>
</dbReference>
<dbReference type="IntAct" id="O83982">
    <property type="interactions" value="65"/>
</dbReference>
<dbReference type="STRING" id="243276.TP_1019"/>
<dbReference type="EnsemblBacteria" id="AAC65969">
    <property type="protein sequence ID" value="AAC65969"/>
    <property type="gene ID" value="TP_1019"/>
</dbReference>
<dbReference type="KEGG" id="tpa:TP_1019"/>
<dbReference type="eggNOG" id="COG0721">
    <property type="taxonomic scope" value="Bacteria"/>
</dbReference>
<dbReference type="HOGENOM" id="CLU_105899_3_0_12"/>
<dbReference type="Proteomes" id="UP000000811">
    <property type="component" value="Chromosome"/>
</dbReference>
<dbReference type="GO" id="GO:0050566">
    <property type="term" value="F:asparaginyl-tRNA synthase (glutamine-hydrolyzing) activity"/>
    <property type="evidence" value="ECO:0007669"/>
    <property type="project" value="RHEA"/>
</dbReference>
<dbReference type="GO" id="GO:0005524">
    <property type="term" value="F:ATP binding"/>
    <property type="evidence" value="ECO:0007669"/>
    <property type="project" value="UniProtKB-KW"/>
</dbReference>
<dbReference type="GO" id="GO:0050567">
    <property type="term" value="F:glutaminyl-tRNA synthase (glutamine-hydrolyzing) activity"/>
    <property type="evidence" value="ECO:0007669"/>
    <property type="project" value="RHEA"/>
</dbReference>
<dbReference type="GO" id="GO:0006412">
    <property type="term" value="P:translation"/>
    <property type="evidence" value="ECO:0007669"/>
    <property type="project" value="UniProtKB-KW"/>
</dbReference>
<reference key="1">
    <citation type="journal article" date="1998" name="Science">
        <title>Complete genome sequence of Treponema pallidum, the syphilis spirochete.</title>
        <authorList>
            <person name="Fraser C.M."/>
            <person name="Norris S.J."/>
            <person name="Weinstock G.M."/>
            <person name="White O."/>
            <person name="Sutton G.G."/>
            <person name="Dodson R.J."/>
            <person name="Gwinn M.L."/>
            <person name="Hickey E.K."/>
            <person name="Clayton R.A."/>
            <person name="Ketchum K.A."/>
            <person name="Sodergren E."/>
            <person name="Hardham J.M."/>
            <person name="McLeod M.P."/>
            <person name="Salzberg S.L."/>
            <person name="Peterson J.D."/>
            <person name="Khalak H.G."/>
            <person name="Richardson D.L."/>
            <person name="Howell J.K."/>
            <person name="Chidambaram M."/>
            <person name="Utterback T.R."/>
            <person name="McDonald L.A."/>
            <person name="Artiach P."/>
            <person name="Bowman C."/>
            <person name="Cotton M.D."/>
            <person name="Fujii C."/>
            <person name="Garland S.A."/>
            <person name="Hatch B."/>
            <person name="Horst K."/>
            <person name="Roberts K.M."/>
            <person name="Sandusky M."/>
            <person name="Weidman J.F."/>
            <person name="Smith H.O."/>
            <person name="Venter J.C."/>
        </authorList>
    </citation>
    <scope>NUCLEOTIDE SEQUENCE [LARGE SCALE GENOMIC DNA]</scope>
    <source>
        <strain>Nichols</strain>
    </source>
</reference>
<name>GATC_TREPA</name>
<sequence>MAQQRITSDIFAQLLTLSHLESSECAVGLATQIEDIIQYFSVVEQFDPGPRDDPDTDNAQGRCSQGNKIDVDCCPDWVRKDVALPGLSVHDLKRLSTEFADGYFRAPRALDGSA</sequence>
<proteinExistence type="inferred from homology"/>
<organism>
    <name type="scientific">Treponema pallidum (strain Nichols)</name>
    <dbReference type="NCBI Taxonomy" id="243276"/>
    <lineage>
        <taxon>Bacteria</taxon>
        <taxon>Pseudomonadati</taxon>
        <taxon>Spirochaetota</taxon>
        <taxon>Spirochaetia</taxon>
        <taxon>Spirochaetales</taxon>
        <taxon>Treponemataceae</taxon>
        <taxon>Treponema</taxon>
    </lineage>
</organism>
<feature type="chain" id="PRO_0000105355" description="Glutamyl-tRNA(Gln) amidotransferase subunit C">
    <location>
        <begin position="1"/>
        <end position="114"/>
    </location>
</feature>
<feature type="region of interest" description="Disordered" evidence="2">
    <location>
        <begin position="46"/>
        <end position="65"/>
    </location>
</feature>
<gene>
    <name type="primary">gatC</name>
    <name type="ordered locus">TP_1019</name>
</gene>
<accession>O83982</accession>